<protein>
    <recommendedName>
        <fullName evidence="1">Photosystem II CP47 reaction center protein</fullName>
    </recommendedName>
    <alternativeName>
        <fullName evidence="1">PSII 47 kDa protein</fullName>
    </alternativeName>
    <alternativeName>
        <fullName evidence="1">Protein CP-47</fullName>
    </alternativeName>
</protein>
<comment type="function">
    <text evidence="1">One of the components of the core complex of photosystem II (PSII). It binds chlorophyll and helps catalyze the primary light-induced photochemical processes of PSII. PSII is a light-driven water:plastoquinone oxidoreductase, using light energy to abstract electrons from H(2)O, generating O(2) and a proton gradient subsequently used for ATP formation.</text>
</comment>
<comment type="cofactor">
    <text evidence="1">Binds multiple chlorophylls. PSII binds additional chlorophylls, carotenoids and specific lipids.</text>
</comment>
<comment type="subunit">
    <text evidence="1">PSII is composed of 1 copy each of membrane proteins PsbA, PsbB, PsbC, PsbD, PsbE, PsbF, PsbH, PsbI, PsbJ, PsbK, PsbL, PsbM, PsbT, PsbX, PsbY, PsbZ, Psb30/Ycf12, at least 3 peripheral proteins of the oxygen-evolving complex and a large number of cofactors. It forms dimeric complexes.</text>
</comment>
<comment type="subcellular location">
    <subcellularLocation>
        <location evidence="1">Plastid</location>
        <location evidence="1">Chloroplast thylakoid membrane</location>
        <topology evidence="1">Multi-pass membrane protein</topology>
    </subcellularLocation>
</comment>
<comment type="similarity">
    <text evidence="1">Belongs to the PsbB/PsbC family. PsbB subfamily.</text>
</comment>
<gene>
    <name evidence="1" type="primary">psbB</name>
</gene>
<dbReference type="EMBL" id="AP009370">
    <property type="protein sequence ID" value="BAF50136.1"/>
    <property type="molecule type" value="Genomic_DNA"/>
</dbReference>
<dbReference type="RefSeq" id="YP_001123312.1">
    <property type="nucleotide sequence ID" value="NC_009269.1"/>
</dbReference>
<dbReference type="SMR" id="A4QKD1"/>
<dbReference type="GeneID" id="4961913"/>
<dbReference type="GO" id="GO:0009535">
    <property type="term" value="C:chloroplast thylakoid membrane"/>
    <property type="evidence" value="ECO:0007669"/>
    <property type="project" value="UniProtKB-SubCell"/>
</dbReference>
<dbReference type="GO" id="GO:0009523">
    <property type="term" value="C:photosystem II"/>
    <property type="evidence" value="ECO:0007669"/>
    <property type="project" value="UniProtKB-KW"/>
</dbReference>
<dbReference type="GO" id="GO:0016168">
    <property type="term" value="F:chlorophyll binding"/>
    <property type="evidence" value="ECO:0007669"/>
    <property type="project" value="UniProtKB-UniRule"/>
</dbReference>
<dbReference type="GO" id="GO:0045156">
    <property type="term" value="F:electron transporter, transferring electrons within the cyclic electron transport pathway of photosynthesis activity"/>
    <property type="evidence" value="ECO:0007669"/>
    <property type="project" value="InterPro"/>
</dbReference>
<dbReference type="GO" id="GO:0009772">
    <property type="term" value="P:photosynthetic electron transport in photosystem II"/>
    <property type="evidence" value="ECO:0007669"/>
    <property type="project" value="InterPro"/>
</dbReference>
<dbReference type="FunFam" id="3.10.680.10:FF:000001">
    <property type="entry name" value="Photosystem II CP47 reaction center protein"/>
    <property type="match status" value="1"/>
</dbReference>
<dbReference type="Gene3D" id="3.10.680.10">
    <property type="entry name" value="Photosystem II CP47 reaction center protein"/>
    <property type="match status" value="1"/>
</dbReference>
<dbReference type="HAMAP" id="MF_01495">
    <property type="entry name" value="PSII_PsbB_CP47"/>
    <property type="match status" value="1"/>
</dbReference>
<dbReference type="InterPro" id="IPR000932">
    <property type="entry name" value="PS_antenna-like"/>
</dbReference>
<dbReference type="InterPro" id="IPR036001">
    <property type="entry name" value="PS_II_antenna-like_sf"/>
</dbReference>
<dbReference type="InterPro" id="IPR017486">
    <property type="entry name" value="PSII_PsbB"/>
</dbReference>
<dbReference type="NCBIfam" id="TIGR03039">
    <property type="entry name" value="PS_II_CP47"/>
    <property type="match status" value="1"/>
</dbReference>
<dbReference type="PANTHER" id="PTHR33180">
    <property type="entry name" value="PHOTOSYSTEM II CP43 REACTION CENTER PROTEIN"/>
    <property type="match status" value="1"/>
</dbReference>
<dbReference type="PANTHER" id="PTHR33180:SF38">
    <property type="entry name" value="PHOTOSYSTEM II CP47 REACTION CENTER PROTEIN"/>
    <property type="match status" value="1"/>
</dbReference>
<dbReference type="Pfam" id="PF00421">
    <property type="entry name" value="PSII"/>
    <property type="match status" value="1"/>
</dbReference>
<dbReference type="SUPFAM" id="SSF161077">
    <property type="entry name" value="Photosystem II antenna protein-like"/>
    <property type="match status" value="1"/>
</dbReference>
<geneLocation type="chloroplast"/>
<accession>A4QKD1</accession>
<proteinExistence type="inferred from homology"/>
<reference key="1">
    <citation type="submission" date="2007-03" db="EMBL/GenBank/DDBJ databases">
        <title>Sequencing analysis of Barbarea verna chloroplast DNA.</title>
        <authorList>
            <person name="Hosouchi T."/>
            <person name="Tsuruoka H."/>
            <person name="Kotani H."/>
        </authorList>
    </citation>
    <scope>NUCLEOTIDE SEQUENCE [LARGE SCALE GENOMIC DNA]</scope>
</reference>
<sequence>MGLPWYRVHTVVLNDPGRLLSVHIMHTALVAGWAGSMALYELAVFDPSDPVLDPMWRQGMFVIPFMTRLGITNSWGGWNITGGTITNPGLWSYEGVAGAHIVFSGLCFLAAIWHWVYWDLEIFCDERTGKPSLDLPKIFGIHLFLSGVACFGFGAFHVTGLYGPGIWVSDPYGLTGKVQPVNPAWGVEGFDPFVPGGIASHHIAAGTLGILAGLFHLSVRPPQRLYKGLRMGNIETVLSSSIAAVFFAAFVVAGTMWYGSATTPIELFGPTRYQWDQGYFQQEIYRRVSAGLAENQSLSEAWSKIPEKLAFYDYIGNNPAKGGLFRAGSMDNGDGIAVGWLGHPVFRNKEGRELFVRRMPTFFETFPVVLVDGDGIVRADVPFRRAESKYSVEQVGVTVEFYGGELNGVSYSDPATVKKYARRAQLGEIFELDRATLKSDGVFRSSPRGWFTFGHASFALLFFFGHIWHGARTLFRDVFAGIDPDLDAQVEFGAFQKLGDPTTKRQAV</sequence>
<organism>
    <name type="scientific">Barbarea verna</name>
    <name type="common">Land cress</name>
    <name type="synonym">Erysimum vernum</name>
    <dbReference type="NCBI Taxonomy" id="50458"/>
    <lineage>
        <taxon>Eukaryota</taxon>
        <taxon>Viridiplantae</taxon>
        <taxon>Streptophyta</taxon>
        <taxon>Embryophyta</taxon>
        <taxon>Tracheophyta</taxon>
        <taxon>Spermatophyta</taxon>
        <taxon>Magnoliopsida</taxon>
        <taxon>eudicotyledons</taxon>
        <taxon>Gunneridae</taxon>
        <taxon>Pentapetalae</taxon>
        <taxon>rosids</taxon>
        <taxon>malvids</taxon>
        <taxon>Brassicales</taxon>
        <taxon>Brassicaceae</taxon>
        <taxon>Cardamineae</taxon>
        <taxon>Barbarea</taxon>
    </lineage>
</organism>
<evidence type="ECO:0000255" key="1">
    <source>
        <dbReference type="HAMAP-Rule" id="MF_01495"/>
    </source>
</evidence>
<name>PSBB_BARVE</name>
<keyword id="KW-0148">Chlorophyll</keyword>
<keyword id="KW-0150">Chloroplast</keyword>
<keyword id="KW-0157">Chromophore</keyword>
<keyword id="KW-0472">Membrane</keyword>
<keyword id="KW-0602">Photosynthesis</keyword>
<keyword id="KW-0604">Photosystem II</keyword>
<keyword id="KW-0934">Plastid</keyword>
<keyword id="KW-0793">Thylakoid</keyword>
<keyword id="KW-0812">Transmembrane</keyword>
<keyword id="KW-1133">Transmembrane helix</keyword>
<feature type="chain" id="PRO_0000359798" description="Photosystem II CP47 reaction center protein">
    <location>
        <begin position="1"/>
        <end position="508"/>
    </location>
</feature>
<feature type="transmembrane region" description="Helical" evidence="1">
    <location>
        <begin position="21"/>
        <end position="36"/>
    </location>
</feature>
<feature type="transmembrane region" description="Helical" evidence="1">
    <location>
        <begin position="101"/>
        <end position="115"/>
    </location>
</feature>
<feature type="transmembrane region" description="Helical" evidence="1">
    <location>
        <begin position="140"/>
        <end position="156"/>
    </location>
</feature>
<feature type="transmembrane region" description="Helical" evidence="1">
    <location>
        <begin position="203"/>
        <end position="218"/>
    </location>
</feature>
<feature type="transmembrane region" description="Helical" evidence="1">
    <location>
        <begin position="237"/>
        <end position="252"/>
    </location>
</feature>
<feature type="transmembrane region" description="Helical" evidence="1">
    <location>
        <begin position="457"/>
        <end position="472"/>
    </location>
</feature>